<proteinExistence type="inferred from homology"/>
<sequence>MLEIEALYVPLSKLRNIGIMAHIDAGKTTTTERILYYTGRKHVLGSVDEGTATMDWMEQEKERGITIKAAATTCFWKEHRINIIDTPGHVDFTVEVERALRVLDGAVAVFDATAGVEPQSETVWRQAERYSVPRIAFMNKMDKTGADFFMSIKSMVEKLHAKPVAIQVPIGAEKDFIGVVDLIEMKAITWTSEDGSEFIKHEIPENMLDLAEEMREEMISMLAEEDEELLELYLEEQELPVEKIKDILRKATINNKLVPVLCGAAARNKGIQPLLDAVVDYLPSPIDIPAVKAITPSGEEIQIPPSVEGDFAGLAFKIQTDPYVGKLAYVRVYSGKLEKGSYVYNSTKQIRERVARLIFMHADKREDAEYARAGDIVAIIGLKNTTTGDTLCSQERPVLLEKMSFPEPVISIAIEPLTRDDEERMVKAVAALSEEDPTLRINVDRETGQVVLSGMGELHLEIVTDRLKREFGVNVRVGRPQVSYRETIRQTGTAEGKYVRQTGGRGQYGHVIMKFEPLPLDGEKQFEFINKTVGGVIPREYIPAIEEGVKEAMEMGVLAGYPMIGVRAVLLDGSYHEVDSSEIAFKVAASLAFKNAMKICQPVLLEPVMKLEVVVPEEYVGGIIADLNARRAQIESLESRINLRVIKAFVPLSELFGYATTLRSLSQGRAVHVAQFSHYKEAPDKVVEKVLKVV</sequence>
<reference key="1">
    <citation type="submission" date="2007-08" db="EMBL/GenBank/DDBJ databases">
        <title>Complete sequence of Thermotoga lettingae TMO.</title>
        <authorList>
            <consortium name="US DOE Joint Genome Institute"/>
            <person name="Copeland A."/>
            <person name="Lucas S."/>
            <person name="Lapidus A."/>
            <person name="Barry K."/>
            <person name="Glavina del Rio T."/>
            <person name="Dalin E."/>
            <person name="Tice H."/>
            <person name="Pitluck S."/>
            <person name="Foster B."/>
            <person name="Bruce D."/>
            <person name="Schmutz J."/>
            <person name="Larimer F."/>
            <person name="Land M."/>
            <person name="Hauser L."/>
            <person name="Kyrpides N."/>
            <person name="Mikhailova N."/>
            <person name="Nelson K."/>
            <person name="Gogarten J.P."/>
            <person name="Noll K."/>
            <person name="Richardson P."/>
        </authorList>
    </citation>
    <scope>NUCLEOTIDE SEQUENCE [LARGE SCALE GENOMIC DNA]</scope>
    <source>
        <strain>ATCC BAA-301 / DSM 14385 / NBRC 107922 / TMO</strain>
    </source>
</reference>
<protein>
    <recommendedName>
        <fullName evidence="1">Elongation factor G</fullName>
        <shortName evidence="1">EF-G</shortName>
    </recommendedName>
</protein>
<comment type="function">
    <text evidence="1">Catalyzes the GTP-dependent ribosomal translocation step during translation elongation. During this step, the ribosome changes from the pre-translocational (PRE) to the post-translocational (POST) state as the newly formed A-site-bound peptidyl-tRNA and P-site-bound deacylated tRNA move to the P and E sites, respectively. Catalyzes the coordinated movement of the two tRNA molecules, the mRNA and conformational changes in the ribosome.</text>
</comment>
<comment type="subcellular location">
    <subcellularLocation>
        <location evidence="1">Cytoplasm</location>
    </subcellularLocation>
</comment>
<comment type="similarity">
    <text evidence="1">Belongs to the TRAFAC class translation factor GTPase superfamily. Classic translation factor GTPase family. EF-G/EF-2 subfamily.</text>
</comment>
<evidence type="ECO:0000255" key="1">
    <source>
        <dbReference type="HAMAP-Rule" id="MF_00054"/>
    </source>
</evidence>
<name>EFG_PSELT</name>
<gene>
    <name evidence="1" type="primary">fusA</name>
    <name type="ordered locus">Tlet_0576</name>
</gene>
<organism>
    <name type="scientific">Pseudothermotoga lettingae (strain ATCC BAA-301 / DSM 14385 / NBRC 107922 / TMO)</name>
    <name type="common">Thermotoga lettingae</name>
    <dbReference type="NCBI Taxonomy" id="416591"/>
    <lineage>
        <taxon>Bacteria</taxon>
        <taxon>Thermotogati</taxon>
        <taxon>Thermotogota</taxon>
        <taxon>Thermotogae</taxon>
        <taxon>Thermotogales</taxon>
        <taxon>Thermotogaceae</taxon>
        <taxon>Pseudothermotoga</taxon>
    </lineage>
</organism>
<feature type="chain" id="PRO_0000335857" description="Elongation factor G">
    <location>
        <begin position="1"/>
        <end position="694"/>
    </location>
</feature>
<feature type="domain" description="tr-type G">
    <location>
        <begin position="12"/>
        <end position="286"/>
    </location>
</feature>
<feature type="binding site" evidence="1">
    <location>
        <begin position="21"/>
        <end position="28"/>
    </location>
    <ligand>
        <name>GTP</name>
        <dbReference type="ChEBI" id="CHEBI:37565"/>
    </ligand>
</feature>
<feature type="binding site" evidence="1">
    <location>
        <begin position="85"/>
        <end position="89"/>
    </location>
    <ligand>
        <name>GTP</name>
        <dbReference type="ChEBI" id="CHEBI:37565"/>
    </ligand>
</feature>
<feature type="binding site" evidence="1">
    <location>
        <begin position="139"/>
        <end position="142"/>
    </location>
    <ligand>
        <name>GTP</name>
        <dbReference type="ChEBI" id="CHEBI:37565"/>
    </ligand>
</feature>
<dbReference type="EMBL" id="CP000812">
    <property type="protein sequence ID" value="ABV33142.1"/>
    <property type="molecule type" value="Genomic_DNA"/>
</dbReference>
<dbReference type="RefSeq" id="WP_012002623.1">
    <property type="nucleotide sequence ID" value="NZ_BSDV01000001.1"/>
</dbReference>
<dbReference type="SMR" id="A8F4Q8"/>
<dbReference type="STRING" id="416591.Tlet_0576"/>
<dbReference type="KEGG" id="tle:Tlet_0576"/>
<dbReference type="eggNOG" id="COG0480">
    <property type="taxonomic scope" value="Bacteria"/>
</dbReference>
<dbReference type="HOGENOM" id="CLU_002794_4_1_0"/>
<dbReference type="OrthoDB" id="9804431at2"/>
<dbReference type="Proteomes" id="UP000002016">
    <property type="component" value="Chromosome"/>
</dbReference>
<dbReference type="GO" id="GO:0005737">
    <property type="term" value="C:cytoplasm"/>
    <property type="evidence" value="ECO:0007669"/>
    <property type="project" value="UniProtKB-SubCell"/>
</dbReference>
<dbReference type="GO" id="GO:0005525">
    <property type="term" value="F:GTP binding"/>
    <property type="evidence" value="ECO:0007669"/>
    <property type="project" value="UniProtKB-UniRule"/>
</dbReference>
<dbReference type="GO" id="GO:0003924">
    <property type="term" value="F:GTPase activity"/>
    <property type="evidence" value="ECO:0007669"/>
    <property type="project" value="InterPro"/>
</dbReference>
<dbReference type="GO" id="GO:0003746">
    <property type="term" value="F:translation elongation factor activity"/>
    <property type="evidence" value="ECO:0007669"/>
    <property type="project" value="UniProtKB-UniRule"/>
</dbReference>
<dbReference type="GO" id="GO:0032790">
    <property type="term" value="P:ribosome disassembly"/>
    <property type="evidence" value="ECO:0007669"/>
    <property type="project" value="TreeGrafter"/>
</dbReference>
<dbReference type="CDD" id="cd01886">
    <property type="entry name" value="EF-G"/>
    <property type="match status" value="1"/>
</dbReference>
<dbReference type="CDD" id="cd16262">
    <property type="entry name" value="EFG_III"/>
    <property type="match status" value="1"/>
</dbReference>
<dbReference type="CDD" id="cd01434">
    <property type="entry name" value="EFG_mtEFG1_IV"/>
    <property type="match status" value="1"/>
</dbReference>
<dbReference type="CDD" id="cd03713">
    <property type="entry name" value="EFG_mtEFG_C"/>
    <property type="match status" value="1"/>
</dbReference>
<dbReference type="CDD" id="cd04088">
    <property type="entry name" value="EFG_mtEFG_II"/>
    <property type="match status" value="1"/>
</dbReference>
<dbReference type="FunFam" id="2.40.30.10:FF:000006">
    <property type="entry name" value="Elongation factor G"/>
    <property type="match status" value="1"/>
</dbReference>
<dbReference type="FunFam" id="3.30.230.10:FF:000003">
    <property type="entry name" value="Elongation factor G"/>
    <property type="match status" value="1"/>
</dbReference>
<dbReference type="FunFam" id="3.30.70.240:FF:000001">
    <property type="entry name" value="Elongation factor G"/>
    <property type="match status" value="1"/>
</dbReference>
<dbReference type="FunFam" id="3.30.70.870:FF:000001">
    <property type="entry name" value="Elongation factor G"/>
    <property type="match status" value="1"/>
</dbReference>
<dbReference type="FunFam" id="3.40.50.300:FF:000029">
    <property type="entry name" value="Elongation factor G"/>
    <property type="match status" value="1"/>
</dbReference>
<dbReference type="Gene3D" id="3.30.230.10">
    <property type="match status" value="1"/>
</dbReference>
<dbReference type="Gene3D" id="3.30.70.240">
    <property type="match status" value="1"/>
</dbReference>
<dbReference type="Gene3D" id="3.30.70.870">
    <property type="entry name" value="Elongation Factor G (Translational Gtpase), domain 3"/>
    <property type="match status" value="1"/>
</dbReference>
<dbReference type="Gene3D" id="3.40.50.300">
    <property type="entry name" value="P-loop containing nucleotide triphosphate hydrolases"/>
    <property type="match status" value="1"/>
</dbReference>
<dbReference type="Gene3D" id="2.40.30.10">
    <property type="entry name" value="Translation factors"/>
    <property type="match status" value="1"/>
</dbReference>
<dbReference type="HAMAP" id="MF_00054_B">
    <property type="entry name" value="EF_G_EF_2_B"/>
    <property type="match status" value="1"/>
</dbReference>
<dbReference type="InterPro" id="IPR053905">
    <property type="entry name" value="EF-G-like_DII"/>
</dbReference>
<dbReference type="InterPro" id="IPR041095">
    <property type="entry name" value="EFG_II"/>
</dbReference>
<dbReference type="InterPro" id="IPR009022">
    <property type="entry name" value="EFG_III"/>
</dbReference>
<dbReference type="InterPro" id="IPR035647">
    <property type="entry name" value="EFG_III/V"/>
</dbReference>
<dbReference type="InterPro" id="IPR047872">
    <property type="entry name" value="EFG_IV"/>
</dbReference>
<dbReference type="InterPro" id="IPR035649">
    <property type="entry name" value="EFG_V"/>
</dbReference>
<dbReference type="InterPro" id="IPR000640">
    <property type="entry name" value="EFG_V-like"/>
</dbReference>
<dbReference type="InterPro" id="IPR031157">
    <property type="entry name" value="G_TR_CS"/>
</dbReference>
<dbReference type="InterPro" id="IPR027417">
    <property type="entry name" value="P-loop_NTPase"/>
</dbReference>
<dbReference type="InterPro" id="IPR020568">
    <property type="entry name" value="Ribosomal_Su5_D2-typ_SF"/>
</dbReference>
<dbReference type="InterPro" id="IPR014721">
    <property type="entry name" value="Ribsml_uS5_D2-typ_fold_subgr"/>
</dbReference>
<dbReference type="InterPro" id="IPR005225">
    <property type="entry name" value="Small_GTP-bd"/>
</dbReference>
<dbReference type="InterPro" id="IPR000795">
    <property type="entry name" value="T_Tr_GTP-bd_dom"/>
</dbReference>
<dbReference type="InterPro" id="IPR009000">
    <property type="entry name" value="Transl_B-barrel_sf"/>
</dbReference>
<dbReference type="InterPro" id="IPR004540">
    <property type="entry name" value="Transl_elong_EFG/EF2"/>
</dbReference>
<dbReference type="InterPro" id="IPR005517">
    <property type="entry name" value="Transl_elong_EFG/EF2_IV"/>
</dbReference>
<dbReference type="NCBIfam" id="TIGR00484">
    <property type="entry name" value="EF-G"/>
    <property type="match status" value="1"/>
</dbReference>
<dbReference type="NCBIfam" id="NF009379">
    <property type="entry name" value="PRK12740.1-3"/>
    <property type="match status" value="1"/>
</dbReference>
<dbReference type="NCBIfam" id="NF009381">
    <property type="entry name" value="PRK12740.1-5"/>
    <property type="match status" value="1"/>
</dbReference>
<dbReference type="NCBIfam" id="TIGR00231">
    <property type="entry name" value="small_GTP"/>
    <property type="match status" value="1"/>
</dbReference>
<dbReference type="PANTHER" id="PTHR43261:SF1">
    <property type="entry name" value="RIBOSOME-RELEASING FACTOR 2, MITOCHONDRIAL"/>
    <property type="match status" value="1"/>
</dbReference>
<dbReference type="PANTHER" id="PTHR43261">
    <property type="entry name" value="TRANSLATION ELONGATION FACTOR G-RELATED"/>
    <property type="match status" value="1"/>
</dbReference>
<dbReference type="Pfam" id="PF22042">
    <property type="entry name" value="EF-G_D2"/>
    <property type="match status" value="1"/>
</dbReference>
<dbReference type="Pfam" id="PF00679">
    <property type="entry name" value="EFG_C"/>
    <property type="match status" value="1"/>
</dbReference>
<dbReference type="Pfam" id="PF14492">
    <property type="entry name" value="EFG_III"/>
    <property type="match status" value="1"/>
</dbReference>
<dbReference type="Pfam" id="PF03764">
    <property type="entry name" value="EFG_IV"/>
    <property type="match status" value="1"/>
</dbReference>
<dbReference type="Pfam" id="PF00009">
    <property type="entry name" value="GTP_EFTU"/>
    <property type="match status" value="1"/>
</dbReference>
<dbReference type="PRINTS" id="PR00315">
    <property type="entry name" value="ELONGATNFCT"/>
</dbReference>
<dbReference type="SMART" id="SM00838">
    <property type="entry name" value="EFG_C"/>
    <property type="match status" value="1"/>
</dbReference>
<dbReference type="SMART" id="SM00889">
    <property type="entry name" value="EFG_IV"/>
    <property type="match status" value="1"/>
</dbReference>
<dbReference type="SUPFAM" id="SSF54980">
    <property type="entry name" value="EF-G C-terminal domain-like"/>
    <property type="match status" value="2"/>
</dbReference>
<dbReference type="SUPFAM" id="SSF52540">
    <property type="entry name" value="P-loop containing nucleoside triphosphate hydrolases"/>
    <property type="match status" value="1"/>
</dbReference>
<dbReference type="SUPFAM" id="SSF54211">
    <property type="entry name" value="Ribosomal protein S5 domain 2-like"/>
    <property type="match status" value="1"/>
</dbReference>
<dbReference type="SUPFAM" id="SSF50447">
    <property type="entry name" value="Translation proteins"/>
    <property type="match status" value="1"/>
</dbReference>
<dbReference type="PROSITE" id="PS00301">
    <property type="entry name" value="G_TR_1"/>
    <property type="match status" value="1"/>
</dbReference>
<dbReference type="PROSITE" id="PS51722">
    <property type="entry name" value="G_TR_2"/>
    <property type="match status" value="1"/>
</dbReference>
<accession>A8F4Q8</accession>
<keyword id="KW-0963">Cytoplasm</keyword>
<keyword id="KW-0251">Elongation factor</keyword>
<keyword id="KW-0342">GTP-binding</keyword>
<keyword id="KW-0547">Nucleotide-binding</keyword>
<keyword id="KW-0648">Protein biosynthesis</keyword>
<keyword id="KW-1185">Reference proteome</keyword>